<feature type="signal peptide" evidence="5">
    <location>
        <begin position="1"/>
        <end position="20"/>
    </location>
</feature>
<feature type="chain" id="PRO_0000363775" description="Toll-like receptor 2">
    <location>
        <begin position="21"/>
        <end position="784"/>
    </location>
</feature>
<feature type="topological domain" description="Extracellular" evidence="5">
    <location>
        <begin position="21"/>
        <end position="587"/>
    </location>
</feature>
<feature type="transmembrane region" description="Helical" evidence="5">
    <location>
        <begin position="588"/>
        <end position="608"/>
    </location>
</feature>
<feature type="topological domain" description="Cytoplasmic" evidence="5">
    <location>
        <begin position="609"/>
        <end position="784"/>
    </location>
</feature>
<feature type="repeat" description="LRR 1">
    <location>
        <begin position="54"/>
        <end position="77"/>
    </location>
</feature>
<feature type="repeat" description="LRR 2">
    <location>
        <begin position="78"/>
        <end position="101"/>
    </location>
</feature>
<feature type="repeat" description="LRR 3">
    <location>
        <begin position="102"/>
        <end position="125"/>
    </location>
</feature>
<feature type="repeat" description="LRR 4">
    <location>
        <begin position="126"/>
        <end position="150"/>
    </location>
</feature>
<feature type="repeat" description="LRR 5">
    <location>
        <begin position="151"/>
        <end position="175"/>
    </location>
</feature>
<feature type="repeat" description="LRR 6">
    <location>
        <begin position="176"/>
        <end position="199"/>
    </location>
</feature>
<feature type="repeat" description="LRR 7">
    <location>
        <begin position="200"/>
        <end position="223"/>
    </location>
</feature>
<feature type="repeat" description="LRR 8">
    <location>
        <begin position="224"/>
        <end position="250"/>
    </location>
</feature>
<feature type="repeat" description="LRR 9">
    <location>
        <begin position="251"/>
        <end position="278"/>
    </location>
</feature>
<feature type="repeat" description="LRR 10">
    <location>
        <begin position="279"/>
        <end position="308"/>
    </location>
</feature>
<feature type="repeat" description="LRR 11">
    <location>
        <begin position="309"/>
        <end position="337"/>
    </location>
</feature>
<feature type="repeat" description="LRR 12">
    <location>
        <begin position="338"/>
        <end position="361"/>
    </location>
</feature>
<feature type="repeat" description="LRR 13">
    <location>
        <begin position="362"/>
        <end position="388"/>
    </location>
</feature>
<feature type="repeat" description="LRR 14">
    <location>
        <begin position="389"/>
        <end position="414"/>
    </location>
</feature>
<feature type="repeat" description="LRR 15">
    <location>
        <begin position="415"/>
        <end position="437"/>
    </location>
</feature>
<feature type="repeat" description="LRR 16">
    <location>
        <begin position="438"/>
        <end position="457"/>
    </location>
</feature>
<feature type="repeat" description="LRR 17">
    <location>
        <begin position="458"/>
        <end position="478"/>
    </location>
</feature>
<feature type="repeat" description="LRR 18">
    <location>
        <begin position="479"/>
        <end position="500"/>
    </location>
</feature>
<feature type="repeat" description="LRR 19">
    <location>
        <begin position="501"/>
        <end position="524"/>
    </location>
</feature>
<feature type="domain" description="LRRCT">
    <location>
        <begin position="525"/>
        <end position="579"/>
    </location>
</feature>
<feature type="domain" description="TIR" evidence="6">
    <location>
        <begin position="639"/>
        <end position="782"/>
    </location>
</feature>
<feature type="short sequence motif" description="ATG16L1-binding motif">
    <location>
        <begin position="761"/>
        <end position="778"/>
    </location>
</feature>
<feature type="site" description="Interaction with bacterial lipopeptide" evidence="1">
    <location>
        <position position="349"/>
    </location>
</feature>
<feature type="glycosylation site" description="N-linked (GlcNAc...) asparagine" evidence="5">
    <location>
        <position position="114"/>
    </location>
</feature>
<feature type="glycosylation site" description="N-linked (GlcNAc...) asparagine" evidence="5">
    <location>
        <position position="199"/>
    </location>
</feature>
<feature type="glycosylation site" description="N-linked (GlcNAc...) asparagine" evidence="5">
    <location>
        <position position="248"/>
    </location>
</feature>
<feature type="glycosylation site" description="N-linked (GlcNAc...) asparagine" evidence="5">
    <location>
        <position position="442"/>
    </location>
</feature>
<feature type="disulfide bond" evidence="1">
    <location>
        <begin position="30"/>
        <end position="36"/>
    </location>
</feature>
<feature type="disulfide bond" evidence="1">
    <location>
        <begin position="353"/>
        <end position="382"/>
    </location>
</feature>
<feature type="disulfide bond" evidence="1">
    <location>
        <begin position="432"/>
        <end position="454"/>
    </location>
</feature>
<feature type="cross-link" description="Glycyl lysine isopeptide (Lys-Gly) (interchain with G-Cter in ubiquitin)" evidence="3">
    <location>
        <position position="754"/>
    </location>
</feature>
<gene>
    <name type="primary">TLR2</name>
</gene>
<accession>Q0GC71</accession>
<reference key="1">
    <citation type="submission" date="2006-07" db="EMBL/GenBank/DDBJ databases">
        <title>Full-length cDNA cloning and characterization of Toll-like receptor 2 (TLR2) from goat (Capra hiscus).</title>
        <authorList>
            <person name="Das D.K."/>
            <person name="Saini M."/>
            <person name="Dhara A."/>
            <person name="Swarup D."/>
            <person name="Sharma B."/>
            <person name="Gupta P.K."/>
        </authorList>
    </citation>
    <scope>NUCLEOTIDE SEQUENCE [MRNA]</scope>
</reference>
<keyword id="KW-0968">Cytoplasmic vesicle</keyword>
<keyword id="KW-1015">Disulfide bond</keyword>
<keyword id="KW-0325">Glycoprotein</keyword>
<keyword id="KW-0391">Immunity</keyword>
<keyword id="KW-0395">Inflammatory response</keyword>
<keyword id="KW-0399">Innate immunity</keyword>
<keyword id="KW-1017">Isopeptide bond</keyword>
<keyword id="KW-0433">Leucine-rich repeat</keyword>
<keyword id="KW-0472">Membrane</keyword>
<keyword id="KW-0520">NAD</keyword>
<keyword id="KW-0675">Receptor</keyword>
<keyword id="KW-1185">Reference proteome</keyword>
<keyword id="KW-0677">Repeat</keyword>
<keyword id="KW-0732">Signal</keyword>
<keyword id="KW-0812">Transmembrane</keyword>
<keyword id="KW-1133">Transmembrane helix</keyword>
<keyword id="KW-0832">Ubl conjugation</keyword>
<dbReference type="EMBL" id="DQ872435">
    <property type="protein sequence ID" value="ABI31733.1"/>
    <property type="molecule type" value="mRNA"/>
</dbReference>
<dbReference type="RefSeq" id="NP_001272532.1">
    <property type="nucleotide sequence ID" value="NM_001285603.1"/>
</dbReference>
<dbReference type="SMR" id="Q0GC71"/>
<dbReference type="STRING" id="9925.ENSCHIP00000031619"/>
<dbReference type="GlyCosmos" id="Q0GC71">
    <property type="glycosylation" value="4 sites, No reported glycans"/>
</dbReference>
<dbReference type="GeneID" id="100860747"/>
<dbReference type="KEGG" id="chx:100860747"/>
<dbReference type="CTD" id="7097"/>
<dbReference type="OrthoDB" id="1081807at2759"/>
<dbReference type="Proteomes" id="UP000291000">
    <property type="component" value="Unassembled WGS sequence"/>
</dbReference>
<dbReference type="Proteomes" id="UP000694566">
    <property type="component" value="Unplaced"/>
</dbReference>
<dbReference type="GO" id="GO:0005794">
    <property type="term" value="C:Golgi apparatus"/>
    <property type="evidence" value="ECO:0000250"/>
    <property type="project" value="UniProtKB"/>
</dbReference>
<dbReference type="GO" id="GO:0045121">
    <property type="term" value="C:membrane raft"/>
    <property type="evidence" value="ECO:0000250"/>
    <property type="project" value="UniProtKB"/>
</dbReference>
<dbReference type="GO" id="GO:0030670">
    <property type="term" value="C:phagocytic vesicle membrane"/>
    <property type="evidence" value="ECO:0007669"/>
    <property type="project" value="UniProtKB-SubCell"/>
</dbReference>
<dbReference type="GO" id="GO:0005886">
    <property type="term" value="C:plasma membrane"/>
    <property type="evidence" value="ECO:0007669"/>
    <property type="project" value="TreeGrafter"/>
</dbReference>
<dbReference type="GO" id="GO:0043235">
    <property type="term" value="C:receptor complex"/>
    <property type="evidence" value="ECO:0007669"/>
    <property type="project" value="TreeGrafter"/>
</dbReference>
<dbReference type="GO" id="GO:0061809">
    <property type="term" value="F:NAD+ nucleosidase activity, cyclic ADP-ribose generating"/>
    <property type="evidence" value="ECO:0007669"/>
    <property type="project" value="UniProtKB-EC"/>
</dbReference>
<dbReference type="GO" id="GO:0004888">
    <property type="term" value="F:transmembrane signaling receptor activity"/>
    <property type="evidence" value="ECO:0007669"/>
    <property type="project" value="InterPro"/>
</dbReference>
<dbReference type="GO" id="GO:0042497">
    <property type="term" value="F:triacyl lipopeptide binding"/>
    <property type="evidence" value="ECO:0007669"/>
    <property type="project" value="TreeGrafter"/>
</dbReference>
<dbReference type="GO" id="GO:0071726">
    <property type="term" value="P:cellular response to diacyl bacterial lipopeptide"/>
    <property type="evidence" value="ECO:0000250"/>
    <property type="project" value="UniProtKB"/>
</dbReference>
<dbReference type="GO" id="GO:0071727">
    <property type="term" value="P:cellular response to triacyl bacterial lipopeptide"/>
    <property type="evidence" value="ECO:0000250"/>
    <property type="project" value="UniProtKB"/>
</dbReference>
<dbReference type="GO" id="GO:0006954">
    <property type="term" value="P:inflammatory response"/>
    <property type="evidence" value="ECO:0007669"/>
    <property type="project" value="UniProtKB-KW"/>
</dbReference>
<dbReference type="GO" id="GO:0045087">
    <property type="term" value="P:innate immune response"/>
    <property type="evidence" value="ECO:0007669"/>
    <property type="project" value="UniProtKB-KW"/>
</dbReference>
<dbReference type="GO" id="GO:0002224">
    <property type="term" value="P:toll-like receptor signaling pathway"/>
    <property type="evidence" value="ECO:0007669"/>
    <property type="project" value="InterPro"/>
</dbReference>
<dbReference type="FunFam" id="3.40.50.10140:FF:000001">
    <property type="entry name" value="Toll-like receptor 2"/>
    <property type="match status" value="1"/>
</dbReference>
<dbReference type="FunFam" id="3.80.10.10:FF:000046">
    <property type="entry name" value="Toll-like receptor 2"/>
    <property type="match status" value="1"/>
</dbReference>
<dbReference type="Gene3D" id="3.80.10.10">
    <property type="entry name" value="Ribonuclease Inhibitor"/>
    <property type="match status" value="1"/>
</dbReference>
<dbReference type="Gene3D" id="3.40.50.10140">
    <property type="entry name" value="Toll/interleukin-1 receptor homology (TIR) domain"/>
    <property type="match status" value="1"/>
</dbReference>
<dbReference type="InterPro" id="IPR000483">
    <property type="entry name" value="Cys-rich_flank_reg_C"/>
</dbReference>
<dbReference type="InterPro" id="IPR001611">
    <property type="entry name" value="Leu-rich_rpt"/>
</dbReference>
<dbReference type="InterPro" id="IPR003591">
    <property type="entry name" value="Leu-rich_rpt_typical-subtyp"/>
</dbReference>
<dbReference type="InterPro" id="IPR032675">
    <property type="entry name" value="LRR_dom_sf"/>
</dbReference>
<dbReference type="InterPro" id="IPR000157">
    <property type="entry name" value="TIR_dom"/>
</dbReference>
<dbReference type="InterPro" id="IPR017241">
    <property type="entry name" value="Toll-like_receptor"/>
</dbReference>
<dbReference type="InterPro" id="IPR035897">
    <property type="entry name" value="Toll_tir_struct_dom_sf"/>
</dbReference>
<dbReference type="PANTHER" id="PTHR24365">
    <property type="entry name" value="TOLL-LIKE RECEPTOR"/>
    <property type="match status" value="1"/>
</dbReference>
<dbReference type="PANTHER" id="PTHR24365:SF17">
    <property type="entry name" value="TOLL-LIKE RECEPTOR 2"/>
    <property type="match status" value="1"/>
</dbReference>
<dbReference type="Pfam" id="PF13855">
    <property type="entry name" value="LRR_8"/>
    <property type="match status" value="2"/>
</dbReference>
<dbReference type="Pfam" id="PF01582">
    <property type="entry name" value="TIR"/>
    <property type="match status" value="1"/>
</dbReference>
<dbReference type="PIRSF" id="PIRSF037595">
    <property type="entry name" value="Toll-like_receptor"/>
    <property type="match status" value="1"/>
</dbReference>
<dbReference type="PRINTS" id="PR01537">
    <property type="entry name" value="INTRLKN1R1F"/>
</dbReference>
<dbReference type="PRINTS" id="PR00019">
    <property type="entry name" value="LEURICHRPT"/>
</dbReference>
<dbReference type="SMART" id="SM00364">
    <property type="entry name" value="LRR_BAC"/>
    <property type="match status" value="5"/>
</dbReference>
<dbReference type="SMART" id="SM00365">
    <property type="entry name" value="LRR_SD22"/>
    <property type="match status" value="5"/>
</dbReference>
<dbReference type="SMART" id="SM00369">
    <property type="entry name" value="LRR_TYP"/>
    <property type="match status" value="6"/>
</dbReference>
<dbReference type="SMART" id="SM00082">
    <property type="entry name" value="LRRCT"/>
    <property type="match status" value="1"/>
</dbReference>
<dbReference type="SMART" id="SM00255">
    <property type="entry name" value="TIR"/>
    <property type="match status" value="1"/>
</dbReference>
<dbReference type="SUPFAM" id="SSF52058">
    <property type="entry name" value="L domain-like"/>
    <property type="match status" value="1"/>
</dbReference>
<dbReference type="SUPFAM" id="SSF52047">
    <property type="entry name" value="RNI-like"/>
    <property type="match status" value="1"/>
</dbReference>
<dbReference type="SUPFAM" id="SSF52200">
    <property type="entry name" value="Toll/Interleukin receptor TIR domain"/>
    <property type="match status" value="1"/>
</dbReference>
<dbReference type="PROSITE" id="PS51450">
    <property type="entry name" value="LRR"/>
    <property type="match status" value="10"/>
</dbReference>
<dbReference type="PROSITE" id="PS50104">
    <property type="entry name" value="TIR"/>
    <property type="match status" value="1"/>
</dbReference>
<sequence>MPRALWTAWVWAVIILSMEGASHQASSLSCDPTGVCDGHSRSLNSIPSGLTDGVKSLDLSNNEITYVSNRDLQRCVNLKTLRLGANEIHTVEEDSFFHLRNLEYLDLSYNRLSNLSSSWFRSLYALKFLNLLGNVYKTLGETSLFSHLPNLRTLKVGNSNSFTEIHEKDFTGLIFLEELEISAQNLQIYVPKSLKSIQNISHLILHLKQPVLLVDILVDIVSSLDCLELRDTNLHTFHFSEASISEMNTSVKKLIFRNVQFTDESFVEVVKLFNYVSGILEVEFDDCTHDGIGDFRALSLDRIRHLGNVETLTIRKLHIPQFFLFHDLSSIYPLTGKVKRVTIESSKVFLVPCLLSQHLKSLEYLDLSENLMSEETLKNSACKDAWPFLQTLVLRQNRLKSLEKTGELLLTLKNLNNLDISKNNFLSMPETCQWPGKMKQLNLSSTRIHSLTQCLPQTLEILDVSNNNLDSFSLILPQLKELYISRNKLKTLPDASFLPVLSVMRISGNIINTFSKEQLDSFPQLKALEAGGNNFICSCDFLSFTQGQQALARVLVDWPDGYRCDAPSHVRGQRVQDARLSLSECHRAAVVSAVCCALFLLLLLTGVLCHRFHGLWYMKMMWAWLQAKRKPRKAPRRDLCYDAFVSYSEQDSYWVENLMVQELEHFNPPFKLCLHKRDFVPGKWIIDNIIDSIEKSRKTIFVLSENFVRSEWCKYELDFSHFRLFDENNDAAILILLEPIDKKAIPQRFCKLRKIMNTKTYLEWPTDETQQEAFWLNLRAAIRS</sequence>
<name>TLR2_CAPHI</name>
<protein>
    <recommendedName>
        <fullName>Toll-like receptor 2</fullName>
    </recommendedName>
    <cdAntigenName>CD282</cdAntigenName>
</protein>
<organism>
    <name type="scientific">Capra hircus</name>
    <name type="common">Goat</name>
    <dbReference type="NCBI Taxonomy" id="9925"/>
    <lineage>
        <taxon>Eukaryota</taxon>
        <taxon>Metazoa</taxon>
        <taxon>Chordata</taxon>
        <taxon>Craniata</taxon>
        <taxon>Vertebrata</taxon>
        <taxon>Euteleostomi</taxon>
        <taxon>Mammalia</taxon>
        <taxon>Eutheria</taxon>
        <taxon>Laurasiatheria</taxon>
        <taxon>Artiodactyla</taxon>
        <taxon>Ruminantia</taxon>
        <taxon>Pecora</taxon>
        <taxon>Bovidae</taxon>
        <taxon>Caprinae</taxon>
        <taxon>Capra</taxon>
    </lineage>
</organism>
<comment type="function">
    <text evidence="3 4">Cooperates with LY96 to mediate the innate immune response to bacterial lipoproteins and other microbial cell wall components. Cooperates with TLR1 or TLR6 to mediate the innate immune response to bacterial lipoproteins or lipopeptides. Acts via MYD88 and TRAF6, leading to NF-kappa-B activation, cytokine secretion and the inflammatory response (By similarity). May also promote apoptosis in response to lipoproteins. Forms activation clusters composed of several receptors depending on the ligand, these clusters trigger signaling from the cell surface and subsequently are targeted to the Golgi in a lipid-raft dependent pathway. Forms the cluster TLR2:TLR6:CD14:CD36 in response to diacylated lipopeptides and TLR2:TLR1:CD14 in response to triacylated lipopeptides (By similarity).</text>
</comment>
<comment type="subunit">
    <text evidence="3 4">Interacts with LY96, TLR1 and TLR6 (via extracellular domain). TLR2 seems to exist in heterodimers with either TLR1 or TLR6 before stimulation by the ligand. The heterodimers form bigger oligomers in response to their corresponding ligands as well as further heterotypic associations with other receptors such as CD14 and/or CD36. Binds MYD88 (via TIR domain). Interacts with TICAM1. Interacts with CNPY3. Interacts with ATG16L1. Interacts with PPP1R11. Interacts with TICAM2. Interacts with TIRAP (By similarity).</text>
</comment>
<comment type="subcellular location">
    <subcellularLocation>
        <location evidence="4">Membrane</location>
        <topology evidence="5">Single-pass type I membrane protein</topology>
    </subcellularLocation>
    <subcellularLocation>
        <location evidence="4">Cytoplasmic vesicle</location>
        <location evidence="4">Phagosome membrane</location>
        <topology evidence="5">Single-pass type I membrane protein</topology>
    </subcellularLocation>
    <subcellularLocation>
        <location evidence="3">Membrane raft</location>
    </subcellularLocation>
    <text evidence="3">Does not reside in lipid rafts before stimulation but accumulates increasingly in the raft upon the presence of the microbial ligand. In response to diacylated lipoproteins, TLR2:TLR6 heterodimers are recruited in lipid rafts, this recruitment determine the intracellular targeting to the Golgi apparatus. Triacylated lipoproteins induce the same mechanism for TLR2:TLR1 heterodimers.</text>
</comment>
<comment type="domain">
    <text evidence="1">Ester-bound lipid substrates are bound through a crevice formed between the LRR 11 and LRR 12.</text>
</comment>
<comment type="domain">
    <text evidence="1">The ATG16L1-binding motif mediates interaction with ATG16L1.</text>
</comment>
<comment type="PTM">
    <text evidence="4">Ubiquitinated at Lys-754 by PPP1R11, leading to its degradation. Deubiquitinated by USP2.</text>
</comment>
<comment type="PTM">
    <text evidence="3">Glycosylation of Asn-442 is critical for secretion of the N-terminal ectodomain of TLR2.</text>
</comment>
<comment type="similarity">
    <text evidence="7">Belongs to the Toll-like receptor family.</text>
</comment>
<comment type="caution">
    <text evidence="2 7">In some plant proteins and in human SARM1, the TIR domain has NAD(+) hydrolase (NADase) activity (By similarity). However, despite the presence of the catalytic Asp residue, the isolated TIR domain of human TLR4 lacks NADase activity (By similarity). Based on this, it is unlikely that Toll-like receptors have NADase activity.</text>
</comment>
<proteinExistence type="evidence at transcript level"/>
<evidence type="ECO:0000250" key="1"/>
<evidence type="ECO:0000250" key="2">
    <source>
        <dbReference type="UniProtKB" id="O00206"/>
    </source>
</evidence>
<evidence type="ECO:0000250" key="3">
    <source>
        <dbReference type="UniProtKB" id="O60603"/>
    </source>
</evidence>
<evidence type="ECO:0000250" key="4">
    <source>
        <dbReference type="UniProtKB" id="Q9QUN7"/>
    </source>
</evidence>
<evidence type="ECO:0000255" key="5"/>
<evidence type="ECO:0000255" key="6">
    <source>
        <dbReference type="PROSITE-ProRule" id="PRU00204"/>
    </source>
</evidence>
<evidence type="ECO:0000305" key="7"/>